<sequence>MDLTPREKDKLLLFTAGLLAERRKAKGLKLNHPEAVALISCAIMEGAREGRSVAEMMDAGGQVLTREDVMEGVAEMIPEVQVEATFPDGVKLVTVHEPIR</sequence>
<protein>
    <recommendedName>
        <fullName evidence="1">Urease subunit gamma</fullName>
        <ecNumber evidence="1">3.5.1.5</ecNumber>
    </recommendedName>
    <alternativeName>
        <fullName evidence="1">Urea amidohydrolase subunit gamma</fullName>
    </alternativeName>
</protein>
<comment type="catalytic activity">
    <reaction evidence="1">
        <text>urea + 2 H2O + H(+) = hydrogencarbonate + 2 NH4(+)</text>
        <dbReference type="Rhea" id="RHEA:20557"/>
        <dbReference type="ChEBI" id="CHEBI:15377"/>
        <dbReference type="ChEBI" id="CHEBI:15378"/>
        <dbReference type="ChEBI" id="CHEBI:16199"/>
        <dbReference type="ChEBI" id="CHEBI:17544"/>
        <dbReference type="ChEBI" id="CHEBI:28938"/>
        <dbReference type="EC" id="3.5.1.5"/>
    </reaction>
</comment>
<comment type="pathway">
    <text evidence="1">Nitrogen metabolism; urea degradation; CO(2) and NH(3) from urea (urease route): step 1/1.</text>
</comment>
<comment type="subunit">
    <text evidence="1">Heterotrimer of UreA (gamma), UreB (beta) and UreC (alpha) subunits. Three heterotrimers associate to form the active enzyme.</text>
</comment>
<comment type="subcellular location">
    <subcellularLocation>
        <location evidence="1">Cytoplasm</location>
    </subcellularLocation>
</comment>
<comment type="similarity">
    <text evidence="1">Belongs to the urease gamma subunit family.</text>
</comment>
<keyword id="KW-0963">Cytoplasm</keyword>
<keyword id="KW-0378">Hydrolase</keyword>
<keyword id="KW-1185">Reference proteome</keyword>
<dbReference type="EC" id="3.5.1.5" evidence="1"/>
<dbReference type="EMBL" id="CP000453">
    <property type="protein sequence ID" value="ABI55537.1"/>
    <property type="molecule type" value="Genomic_DNA"/>
</dbReference>
<dbReference type="RefSeq" id="WP_011627933.1">
    <property type="nucleotide sequence ID" value="NC_008340.1"/>
</dbReference>
<dbReference type="SMR" id="Q0ACA0"/>
<dbReference type="KEGG" id="aeh:Mlg_0182"/>
<dbReference type="eggNOG" id="COG0831">
    <property type="taxonomic scope" value="Bacteria"/>
</dbReference>
<dbReference type="HOGENOM" id="CLU_145825_1_0_6"/>
<dbReference type="OrthoDB" id="9797217at2"/>
<dbReference type="UniPathway" id="UPA00258">
    <property type="reaction ID" value="UER00370"/>
</dbReference>
<dbReference type="Proteomes" id="UP000001962">
    <property type="component" value="Chromosome"/>
</dbReference>
<dbReference type="GO" id="GO:0005737">
    <property type="term" value="C:cytoplasm"/>
    <property type="evidence" value="ECO:0007669"/>
    <property type="project" value="UniProtKB-SubCell"/>
</dbReference>
<dbReference type="GO" id="GO:0016151">
    <property type="term" value="F:nickel cation binding"/>
    <property type="evidence" value="ECO:0007669"/>
    <property type="project" value="InterPro"/>
</dbReference>
<dbReference type="GO" id="GO:0009039">
    <property type="term" value="F:urease activity"/>
    <property type="evidence" value="ECO:0007669"/>
    <property type="project" value="UniProtKB-UniRule"/>
</dbReference>
<dbReference type="GO" id="GO:0043419">
    <property type="term" value="P:urea catabolic process"/>
    <property type="evidence" value="ECO:0007669"/>
    <property type="project" value="UniProtKB-UniRule"/>
</dbReference>
<dbReference type="CDD" id="cd00390">
    <property type="entry name" value="Urease_gamma"/>
    <property type="match status" value="1"/>
</dbReference>
<dbReference type="Gene3D" id="3.30.280.10">
    <property type="entry name" value="Urease, gamma-like subunit"/>
    <property type="match status" value="1"/>
</dbReference>
<dbReference type="HAMAP" id="MF_00739">
    <property type="entry name" value="Urease_gamma"/>
    <property type="match status" value="1"/>
</dbReference>
<dbReference type="InterPro" id="IPR012010">
    <property type="entry name" value="Urease_gamma"/>
</dbReference>
<dbReference type="InterPro" id="IPR002026">
    <property type="entry name" value="Urease_gamma/gamma-beta_su"/>
</dbReference>
<dbReference type="InterPro" id="IPR036463">
    <property type="entry name" value="Urease_gamma_sf"/>
</dbReference>
<dbReference type="InterPro" id="IPR050069">
    <property type="entry name" value="Urease_subunit"/>
</dbReference>
<dbReference type="NCBIfam" id="NF009712">
    <property type="entry name" value="PRK13241.1"/>
    <property type="match status" value="1"/>
</dbReference>
<dbReference type="NCBIfam" id="TIGR00193">
    <property type="entry name" value="urease_gam"/>
    <property type="match status" value="1"/>
</dbReference>
<dbReference type="PANTHER" id="PTHR33569">
    <property type="entry name" value="UREASE"/>
    <property type="match status" value="1"/>
</dbReference>
<dbReference type="PANTHER" id="PTHR33569:SF1">
    <property type="entry name" value="UREASE"/>
    <property type="match status" value="1"/>
</dbReference>
<dbReference type="Pfam" id="PF00547">
    <property type="entry name" value="Urease_gamma"/>
    <property type="match status" value="1"/>
</dbReference>
<dbReference type="PIRSF" id="PIRSF001223">
    <property type="entry name" value="Urease_gamma"/>
    <property type="match status" value="1"/>
</dbReference>
<dbReference type="SUPFAM" id="SSF54111">
    <property type="entry name" value="Urease, gamma-subunit"/>
    <property type="match status" value="1"/>
</dbReference>
<name>URE3_ALKEH</name>
<organism>
    <name type="scientific">Alkalilimnicola ehrlichii (strain ATCC BAA-1101 / DSM 17681 / MLHE-1)</name>
    <dbReference type="NCBI Taxonomy" id="187272"/>
    <lineage>
        <taxon>Bacteria</taxon>
        <taxon>Pseudomonadati</taxon>
        <taxon>Pseudomonadota</taxon>
        <taxon>Gammaproteobacteria</taxon>
        <taxon>Chromatiales</taxon>
        <taxon>Ectothiorhodospiraceae</taxon>
        <taxon>Alkalilimnicola</taxon>
    </lineage>
</organism>
<feature type="chain" id="PRO_1000046308" description="Urease subunit gamma">
    <location>
        <begin position="1"/>
        <end position="100"/>
    </location>
</feature>
<evidence type="ECO:0000255" key="1">
    <source>
        <dbReference type="HAMAP-Rule" id="MF_00739"/>
    </source>
</evidence>
<proteinExistence type="inferred from homology"/>
<gene>
    <name evidence="1" type="primary">ureA</name>
    <name type="ordered locus">Mlg_0182</name>
</gene>
<reference key="1">
    <citation type="submission" date="2006-08" db="EMBL/GenBank/DDBJ databases">
        <title>Complete sequence of Alkalilimnicola ehrilichei MLHE-1.</title>
        <authorList>
            <person name="Copeland A."/>
            <person name="Lucas S."/>
            <person name="Lapidus A."/>
            <person name="Barry K."/>
            <person name="Detter J.C."/>
            <person name="Glavina del Rio T."/>
            <person name="Hammon N."/>
            <person name="Israni S."/>
            <person name="Dalin E."/>
            <person name="Tice H."/>
            <person name="Pitluck S."/>
            <person name="Sims D."/>
            <person name="Brettin T."/>
            <person name="Bruce D."/>
            <person name="Han C."/>
            <person name="Tapia R."/>
            <person name="Gilna P."/>
            <person name="Schmutz J."/>
            <person name="Larimer F."/>
            <person name="Land M."/>
            <person name="Hauser L."/>
            <person name="Kyrpides N."/>
            <person name="Mikhailova N."/>
            <person name="Oremland R.S."/>
            <person name="Hoeft S.E."/>
            <person name="Switzer-Blum J."/>
            <person name="Kulp T."/>
            <person name="King G."/>
            <person name="Tabita R."/>
            <person name="Witte B."/>
            <person name="Santini J.M."/>
            <person name="Basu P."/>
            <person name="Hollibaugh J.T."/>
            <person name="Xie G."/>
            <person name="Stolz J.F."/>
            <person name="Richardson P."/>
        </authorList>
    </citation>
    <scope>NUCLEOTIDE SEQUENCE [LARGE SCALE GENOMIC DNA]</scope>
    <source>
        <strain>ATCC BAA-1101 / DSM 17681 / MLHE-1</strain>
    </source>
</reference>
<accession>Q0ACA0</accession>